<organism>
    <name type="scientific">Mycobacterium tuberculosis (strain ATCC 25618 / H37Rv)</name>
    <dbReference type="NCBI Taxonomy" id="83332"/>
    <lineage>
        <taxon>Bacteria</taxon>
        <taxon>Bacillati</taxon>
        <taxon>Actinomycetota</taxon>
        <taxon>Actinomycetes</taxon>
        <taxon>Mycobacteriales</taxon>
        <taxon>Mycobacteriaceae</taxon>
        <taxon>Mycobacterium</taxon>
        <taxon>Mycobacterium tuberculosis complex</taxon>
    </lineage>
</organism>
<name>ESXD_MYCTU</name>
<dbReference type="EMBL" id="AL123456">
    <property type="protein sequence ID" value="CCP46720.1"/>
    <property type="molecule type" value="Genomic_DNA"/>
</dbReference>
<dbReference type="RefSeq" id="NP_218408.1">
    <property type="nucleotide sequence ID" value="NC_000962.3"/>
</dbReference>
<dbReference type="RefSeq" id="WP_003899751.1">
    <property type="nucleotide sequence ID" value="NZ_NVQJ01000005.1"/>
</dbReference>
<dbReference type="SMR" id="O05453"/>
<dbReference type="STRING" id="83332.Rv3891c"/>
<dbReference type="PaxDb" id="83332-Rv3891c"/>
<dbReference type="DNASU" id="886218"/>
<dbReference type="GeneID" id="886218"/>
<dbReference type="KEGG" id="mtu:Rv3891c"/>
<dbReference type="KEGG" id="mtv:RVBD_3891c"/>
<dbReference type="PATRIC" id="fig|83332.111.peg.4333"/>
<dbReference type="TubercuList" id="Rv3891c"/>
<dbReference type="eggNOG" id="ENOG5030RIW">
    <property type="taxonomic scope" value="Bacteria"/>
</dbReference>
<dbReference type="InParanoid" id="O05453"/>
<dbReference type="OrthoDB" id="4747772at2"/>
<dbReference type="Proteomes" id="UP000001584">
    <property type="component" value="Chromosome"/>
</dbReference>
<dbReference type="GO" id="GO:0005576">
    <property type="term" value="C:extracellular region"/>
    <property type="evidence" value="ECO:0007669"/>
    <property type="project" value="UniProtKB-SubCell"/>
</dbReference>
<dbReference type="Gene3D" id="1.10.287.1060">
    <property type="entry name" value="ESAT-6-like"/>
    <property type="match status" value="1"/>
</dbReference>
<dbReference type="InterPro" id="IPR036689">
    <property type="entry name" value="ESAT-6-like_sf"/>
</dbReference>
<dbReference type="InterPro" id="IPR010310">
    <property type="entry name" value="T7SS_ESAT-6-like"/>
</dbReference>
<dbReference type="Pfam" id="PF06013">
    <property type="entry name" value="WXG100"/>
    <property type="match status" value="1"/>
</dbReference>
<dbReference type="SUPFAM" id="SSF140453">
    <property type="entry name" value="EsxAB dimer-like"/>
    <property type="match status" value="1"/>
</dbReference>
<protein>
    <recommendedName>
        <fullName evidence="2">ESAT-6-like protein EsxD</fullName>
    </recommendedName>
</protein>
<keyword id="KW-1185">Reference proteome</keyword>
<keyword id="KW-0964">Secreted</keyword>
<gene>
    <name evidence="1" type="primary">esxD</name>
    <name evidence="4" type="ordered locus">Rv3891c</name>
</gene>
<accession>O05453</accession>
<accession>F2GDQ2</accession>
<accession>I6YHE5</accession>
<accession>Q7D4N5</accession>
<feature type="chain" id="PRO_0000436931" description="ESAT-6-like protein EsxD">
    <location>
        <begin position="1"/>
        <end position="107"/>
    </location>
</feature>
<evidence type="ECO:0000303" key="1">
    <source>
    </source>
</evidence>
<evidence type="ECO:0000305" key="2"/>
<evidence type="ECO:0000305" key="3">
    <source>
    </source>
</evidence>
<evidence type="ECO:0000312" key="4">
    <source>
        <dbReference type="EMBL" id="CCP46720.1"/>
    </source>
</evidence>
<reference key="1">
    <citation type="journal article" date="1998" name="Nature">
        <title>Deciphering the biology of Mycobacterium tuberculosis from the complete genome sequence.</title>
        <authorList>
            <person name="Cole S.T."/>
            <person name="Brosch R."/>
            <person name="Parkhill J."/>
            <person name="Garnier T."/>
            <person name="Churcher C.M."/>
            <person name="Harris D.E."/>
            <person name="Gordon S.V."/>
            <person name="Eiglmeier K."/>
            <person name="Gas S."/>
            <person name="Barry C.E. III"/>
            <person name="Tekaia F."/>
            <person name="Badcock K."/>
            <person name="Basham D."/>
            <person name="Brown D."/>
            <person name="Chillingworth T."/>
            <person name="Connor R."/>
            <person name="Davies R.M."/>
            <person name="Devlin K."/>
            <person name="Feltwell T."/>
            <person name="Gentles S."/>
            <person name="Hamlin N."/>
            <person name="Holroyd S."/>
            <person name="Hornsby T."/>
            <person name="Jagels K."/>
            <person name="Krogh A."/>
            <person name="McLean J."/>
            <person name="Moule S."/>
            <person name="Murphy L.D."/>
            <person name="Oliver S."/>
            <person name="Osborne J."/>
            <person name="Quail M.A."/>
            <person name="Rajandream M.A."/>
            <person name="Rogers J."/>
            <person name="Rutter S."/>
            <person name="Seeger K."/>
            <person name="Skelton S."/>
            <person name="Squares S."/>
            <person name="Squares R."/>
            <person name="Sulston J.E."/>
            <person name="Taylor K."/>
            <person name="Whitehead S."/>
            <person name="Barrell B.G."/>
        </authorList>
    </citation>
    <scope>NUCLEOTIDE SEQUENCE [LARGE SCALE GENOMIC DNA]</scope>
    <source>
        <strain>ATCC 25618 / H37Rv</strain>
    </source>
</reference>
<reference key="2">
    <citation type="journal article" date="2009" name="PLoS Pathog.">
        <title>Systematic genetic nomenclature for type VII secretion systems.</title>
        <authorList>
            <person name="Bitter W."/>
            <person name="Houben E.N."/>
            <person name="Bottai D."/>
            <person name="Brodin P."/>
            <person name="Brown E.J."/>
            <person name="Cox J.S."/>
            <person name="Derbyshire K."/>
            <person name="Fortune S.M."/>
            <person name="Gao L.Y."/>
            <person name="Liu J."/>
            <person name="Gey van Pittius N.C."/>
            <person name="Pym A.S."/>
            <person name="Rubin E.J."/>
            <person name="Sherman D.R."/>
            <person name="Cole S.T."/>
            <person name="Brosch R."/>
        </authorList>
    </citation>
    <scope>NOMENCLATURE</scope>
</reference>
<reference key="3">
    <citation type="journal article" date="2011" name="Mol. Cell. Proteomics">
        <title>Proteogenomic analysis of Mycobacterium tuberculosis by high resolution mass spectrometry.</title>
        <authorList>
            <person name="Kelkar D.S."/>
            <person name="Kumar D."/>
            <person name="Kumar P."/>
            <person name="Balakrishnan L."/>
            <person name="Muthusamy B."/>
            <person name="Yadav A.K."/>
            <person name="Shrivastava P."/>
            <person name="Marimuthu A."/>
            <person name="Anand S."/>
            <person name="Sundaram H."/>
            <person name="Kingsbury R."/>
            <person name="Harsha H.C."/>
            <person name="Nair B."/>
            <person name="Prasad T.S."/>
            <person name="Chauhan D.S."/>
            <person name="Katoch K."/>
            <person name="Katoch V.M."/>
            <person name="Kumar P."/>
            <person name="Chaerkady R."/>
            <person name="Ramachandran S."/>
            <person name="Dash D."/>
            <person name="Pandey A."/>
        </authorList>
    </citation>
    <scope>IDENTIFICATION BY MASS SPECTROMETRY [LARGE SCALE ANALYSIS]</scope>
    <source>
        <strain>ATCC 25618 / H37Rv</strain>
    </source>
</reference>
<sequence>MADTIQVTPQMLRSTANDIQANMEQAMGIAKGYLANQENVMNPATWSGTGVVASHMTATEITNELNKVLTGGTRLAEGLVQAAALMEGHEADSQTAFQALFGASHGS</sequence>
<comment type="subcellular location">
    <subcellularLocation>
        <location evidence="3">Secreted</location>
    </subcellularLocation>
    <text evidence="3">Probably secreted via the ESX-2 / type VII secretion system (T7SS).</text>
</comment>
<comment type="similarity">
    <text evidence="3">Belongs to the WXG100 family. CFP-10 subfamily.</text>
</comment>
<proteinExistence type="evidence at protein level"/>